<sequence>MGTMRSVYLIIIIILFFAFISLSFGEIYEYRGVVFYPNGSQTVDVSKLHIDYENPDAFSIYISYRNSSFYLPYSKNITLNLPPKKFNISITISASRISRDEWRVYYKIINNYPYSILFNISFPGGFNIKNASVLVPAKSYKIITLSKIQNSNILYFGDSNISFEVPAKLMIRYSLPIPFSIIKSNKILSNGSIEWTAIYIIKNDKNVSLNVNASYWAVVNNTKIDFGNYSYIIEPNENVSQSFNITSDYVPIFYLKFYAWRDVYETIKIKPAIKVDNSYIIGIGKVEGLSFNIPYYNYMEREIKKKKEEKENEESSKTINQMQRHKKEEKSQTQETKKPSKNEMNKQEKERKYPLIIEEKFKKVAAAIATVTTTSITAMLIPPIFRRRSYIVDKGIFSIKDLELLSGTVYVPEGCKLGNILPGGITIIKLTDVEKDLARDLHEIYDIPLNSAKAIILGVKYGGRVFLSDKKAYDVAVEIGLEAYLF</sequence>
<evidence type="ECO:0000255" key="1"/>
<evidence type="ECO:0000256" key="2">
    <source>
        <dbReference type="SAM" id="MobiDB-lite"/>
    </source>
</evidence>
<dbReference type="EMBL" id="L77117">
    <property type="protein sequence ID" value="AAB99410.1"/>
    <property type="molecule type" value="Genomic_DNA"/>
</dbReference>
<dbReference type="PIR" id="D64474">
    <property type="entry name" value="D64474"/>
</dbReference>
<dbReference type="STRING" id="243232.MJ_1397"/>
<dbReference type="PaxDb" id="243232-MJ_1397"/>
<dbReference type="EnsemblBacteria" id="AAB99410">
    <property type="protein sequence ID" value="AAB99410"/>
    <property type="gene ID" value="MJ_1397"/>
</dbReference>
<dbReference type="KEGG" id="mja:MJ_1397"/>
<dbReference type="eggNOG" id="arCOG07531">
    <property type="taxonomic scope" value="Archaea"/>
</dbReference>
<dbReference type="HOGENOM" id="CLU_521413_0_0_2"/>
<dbReference type="InParanoid" id="Q58792"/>
<dbReference type="OrthoDB" id="66051at2157"/>
<dbReference type="Proteomes" id="UP000000805">
    <property type="component" value="Chromosome"/>
</dbReference>
<dbReference type="PROSITE" id="PS00189">
    <property type="entry name" value="LIPOYL"/>
    <property type="match status" value="1"/>
</dbReference>
<accession>Q58792</accession>
<reference key="1">
    <citation type="journal article" date="1996" name="Science">
        <title>Complete genome sequence of the methanogenic archaeon, Methanococcus jannaschii.</title>
        <authorList>
            <person name="Bult C.J."/>
            <person name="White O."/>
            <person name="Olsen G.J."/>
            <person name="Zhou L."/>
            <person name="Fleischmann R.D."/>
            <person name="Sutton G.G."/>
            <person name="Blake J.A."/>
            <person name="FitzGerald L.M."/>
            <person name="Clayton R.A."/>
            <person name="Gocayne J.D."/>
            <person name="Kerlavage A.R."/>
            <person name="Dougherty B.A."/>
            <person name="Tomb J.-F."/>
            <person name="Adams M.D."/>
            <person name="Reich C.I."/>
            <person name="Overbeek R."/>
            <person name="Kirkness E.F."/>
            <person name="Weinstock K.G."/>
            <person name="Merrick J.M."/>
            <person name="Glodek A."/>
            <person name="Scott J.L."/>
            <person name="Geoghagen N.S.M."/>
            <person name="Weidman J.F."/>
            <person name="Fuhrmann J.L."/>
            <person name="Nguyen D."/>
            <person name="Utterback T.R."/>
            <person name="Kelley J.M."/>
            <person name="Peterson J.D."/>
            <person name="Sadow P.W."/>
            <person name="Hanna M.C."/>
            <person name="Cotton M.D."/>
            <person name="Roberts K.M."/>
            <person name="Hurst M.A."/>
            <person name="Kaine B.P."/>
            <person name="Borodovsky M."/>
            <person name="Klenk H.-P."/>
            <person name="Fraser C.M."/>
            <person name="Smith H.O."/>
            <person name="Woese C.R."/>
            <person name="Venter J.C."/>
        </authorList>
    </citation>
    <scope>NUCLEOTIDE SEQUENCE [LARGE SCALE GENOMIC DNA]</scope>
    <source>
        <strain>ATCC 43067 / DSM 2661 / JAL-1 / JCM 10045 / NBRC 100440</strain>
    </source>
</reference>
<protein>
    <recommendedName>
        <fullName>Uncharacterized protein MJ1397</fullName>
    </recommendedName>
</protein>
<organism>
    <name type="scientific">Methanocaldococcus jannaschii (strain ATCC 43067 / DSM 2661 / JAL-1 / JCM 10045 / NBRC 100440)</name>
    <name type="common">Methanococcus jannaschii</name>
    <dbReference type="NCBI Taxonomy" id="243232"/>
    <lineage>
        <taxon>Archaea</taxon>
        <taxon>Methanobacteriati</taxon>
        <taxon>Methanobacteriota</taxon>
        <taxon>Methanomada group</taxon>
        <taxon>Methanococci</taxon>
        <taxon>Methanococcales</taxon>
        <taxon>Methanocaldococcaceae</taxon>
        <taxon>Methanocaldococcus</taxon>
    </lineage>
</organism>
<proteinExistence type="inferred from homology"/>
<keyword id="KW-1185">Reference proteome</keyword>
<keyword id="KW-0732">Signal</keyword>
<feature type="signal peptide" evidence="1">
    <location>
        <begin position="1"/>
        <end position="25"/>
    </location>
</feature>
<feature type="chain" id="PRO_0000014014" description="Uncharacterized protein MJ1397">
    <location>
        <begin position="26"/>
        <end position="486"/>
    </location>
</feature>
<feature type="region of interest" description="Disordered" evidence="2">
    <location>
        <begin position="306"/>
        <end position="349"/>
    </location>
</feature>
<feature type="compositionally biased region" description="Basic and acidic residues" evidence="2">
    <location>
        <begin position="306"/>
        <end position="316"/>
    </location>
</feature>
<feature type="compositionally biased region" description="Basic and acidic residues" evidence="2">
    <location>
        <begin position="326"/>
        <end position="349"/>
    </location>
</feature>
<name>Y1397_METJA</name>
<gene>
    <name type="ordered locus">MJ1397</name>
</gene>